<comment type="function">
    <text evidence="1">Catalyzes the NADPH-dependent reduction of glutamyl-tRNA(Glu) to glutamate 1-semialdehyde (GSA).</text>
</comment>
<comment type="catalytic activity">
    <reaction evidence="1">
        <text>(S)-4-amino-5-oxopentanoate + tRNA(Glu) + NADP(+) = L-glutamyl-tRNA(Glu) + NADPH + H(+)</text>
        <dbReference type="Rhea" id="RHEA:12344"/>
        <dbReference type="Rhea" id="RHEA-COMP:9663"/>
        <dbReference type="Rhea" id="RHEA-COMP:9680"/>
        <dbReference type="ChEBI" id="CHEBI:15378"/>
        <dbReference type="ChEBI" id="CHEBI:57501"/>
        <dbReference type="ChEBI" id="CHEBI:57783"/>
        <dbReference type="ChEBI" id="CHEBI:58349"/>
        <dbReference type="ChEBI" id="CHEBI:78442"/>
        <dbReference type="ChEBI" id="CHEBI:78520"/>
        <dbReference type="EC" id="1.2.1.70"/>
    </reaction>
</comment>
<comment type="pathway">
    <text evidence="1">Porphyrin-containing compound metabolism; protoporphyrin-IX biosynthesis; 5-aminolevulinate from L-glutamyl-tRNA(Glu): step 1/2.</text>
</comment>
<comment type="subunit">
    <text evidence="1">Homodimer.</text>
</comment>
<comment type="domain">
    <text evidence="1">Possesses an unusual extended V-shaped dimeric structure with each monomer consisting of three distinct domains arranged along a curved 'spinal' alpha-helix. The N-terminal catalytic domain specifically recognizes the glutamate moiety of the substrate. The second domain is the NADPH-binding domain, and the third C-terminal domain is responsible for dimerization.</text>
</comment>
<comment type="miscellaneous">
    <text evidence="1">During catalysis, the active site Cys acts as a nucleophile attacking the alpha-carbonyl group of tRNA-bound glutamate with the formation of a thioester intermediate between enzyme and glutamate, and the concomitant release of tRNA(Glu). The thioester intermediate is finally reduced by direct hydride transfer from NADPH, to form the product GSA.</text>
</comment>
<comment type="similarity">
    <text evidence="1">Belongs to the glutamyl-tRNA reductase family.</text>
</comment>
<evidence type="ECO:0000255" key="1">
    <source>
        <dbReference type="HAMAP-Rule" id="MF_00087"/>
    </source>
</evidence>
<feature type="chain" id="PRO_1000190543" description="Glutamyl-tRNA reductase">
    <location>
        <begin position="1"/>
        <end position="419"/>
    </location>
</feature>
<feature type="active site" description="Nucleophile" evidence="1">
    <location>
        <position position="50"/>
    </location>
</feature>
<feature type="binding site" evidence="1">
    <location>
        <begin position="49"/>
        <end position="52"/>
    </location>
    <ligand>
        <name>substrate</name>
    </ligand>
</feature>
<feature type="binding site" evidence="1">
    <location>
        <position position="107"/>
    </location>
    <ligand>
        <name>substrate</name>
    </ligand>
</feature>
<feature type="binding site" evidence="1">
    <location>
        <begin position="112"/>
        <end position="114"/>
    </location>
    <ligand>
        <name>substrate</name>
    </ligand>
</feature>
<feature type="binding site" evidence="1">
    <location>
        <position position="118"/>
    </location>
    <ligand>
        <name>substrate</name>
    </ligand>
</feature>
<feature type="binding site" evidence="1">
    <location>
        <begin position="187"/>
        <end position="192"/>
    </location>
    <ligand>
        <name>NADP(+)</name>
        <dbReference type="ChEBI" id="CHEBI:58349"/>
    </ligand>
</feature>
<feature type="site" description="Important for activity" evidence="1">
    <location>
        <position position="97"/>
    </location>
</feature>
<gene>
    <name evidence="1" type="primary">hemA</name>
    <name type="ordered locus">VCM66_2103</name>
</gene>
<protein>
    <recommendedName>
        <fullName evidence="1">Glutamyl-tRNA reductase</fullName>
        <shortName evidence="1">GluTR</shortName>
        <ecNumber evidence="1">1.2.1.70</ecNumber>
    </recommendedName>
</protein>
<sequence>MSLLAIGINHNTASVELREKVAFGPEKLSLALNQLSTSSHVKGGVILSTCNRTEIYCDVRSASKNKVIEWLSQFHQVSLDELKPSLYVHEEQAAIRHLMRVACGLDSLVLGEPQILGQVKQAYAEARENHAVNPATEKLFQKAFSVAKRVRTETEIGGSAVSVAYAACTLAKHIFESLADATVLLVGAGETIELVAKHLAGHHCKRMIVANRTRERALSLAQQFGADVIALNEIPDYLAQADIVISSTASPLPIIGKGMVESALKARRHQPMLLVDIAVPRDIEPQVGKLNDAYLYSVDDLQSIVDSNIEQRKVEAIQAEAIVSEESATFMSWMRSLQAVDSIRDYRKQANEAREELLNKSLQALAAGGDPEKLLIELSNKLTNKLIHTPTRALQTAAEQGEPAKLAVIRQSLGLDDLN</sequence>
<reference key="1">
    <citation type="journal article" date="2008" name="PLoS ONE">
        <title>A recalibrated molecular clock and independent origins for the cholera pandemic clones.</title>
        <authorList>
            <person name="Feng L."/>
            <person name="Reeves P.R."/>
            <person name="Lan R."/>
            <person name="Ren Y."/>
            <person name="Gao C."/>
            <person name="Zhou Z."/>
            <person name="Ren Y."/>
            <person name="Cheng J."/>
            <person name="Wang W."/>
            <person name="Wang J."/>
            <person name="Qian W."/>
            <person name="Li D."/>
            <person name="Wang L."/>
        </authorList>
    </citation>
    <scope>NUCLEOTIDE SEQUENCE [LARGE SCALE GENOMIC DNA]</scope>
    <source>
        <strain>M66-2</strain>
    </source>
</reference>
<name>HEM1_VIBCM</name>
<organism>
    <name type="scientific">Vibrio cholerae serotype O1 (strain M66-2)</name>
    <dbReference type="NCBI Taxonomy" id="579112"/>
    <lineage>
        <taxon>Bacteria</taxon>
        <taxon>Pseudomonadati</taxon>
        <taxon>Pseudomonadota</taxon>
        <taxon>Gammaproteobacteria</taxon>
        <taxon>Vibrionales</taxon>
        <taxon>Vibrionaceae</taxon>
        <taxon>Vibrio</taxon>
    </lineage>
</organism>
<keyword id="KW-0521">NADP</keyword>
<keyword id="KW-0560">Oxidoreductase</keyword>
<keyword id="KW-0627">Porphyrin biosynthesis</keyword>
<proteinExistence type="inferred from homology"/>
<accession>C3LPI5</accession>
<dbReference type="EC" id="1.2.1.70" evidence="1"/>
<dbReference type="EMBL" id="CP001233">
    <property type="protein sequence ID" value="ACP06405.1"/>
    <property type="molecule type" value="Genomic_DNA"/>
</dbReference>
<dbReference type="RefSeq" id="WP_000054219.1">
    <property type="nucleotide sequence ID" value="NC_012578.1"/>
</dbReference>
<dbReference type="SMR" id="C3LPI5"/>
<dbReference type="GeneID" id="89513844"/>
<dbReference type="KEGG" id="vcm:VCM66_2103"/>
<dbReference type="HOGENOM" id="CLU_035113_2_2_6"/>
<dbReference type="UniPathway" id="UPA00251">
    <property type="reaction ID" value="UER00316"/>
</dbReference>
<dbReference type="Proteomes" id="UP000001217">
    <property type="component" value="Chromosome I"/>
</dbReference>
<dbReference type="GO" id="GO:0008883">
    <property type="term" value="F:glutamyl-tRNA reductase activity"/>
    <property type="evidence" value="ECO:0007669"/>
    <property type="project" value="UniProtKB-UniRule"/>
</dbReference>
<dbReference type="GO" id="GO:0050661">
    <property type="term" value="F:NADP binding"/>
    <property type="evidence" value="ECO:0007669"/>
    <property type="project" value="InterPro"/>
</dbReference>
<dbReference type="GO" id="GO:0019353">
    <property type="term" value="P:protoporphyrinogen IX biosynthetic process from glutamate"/>
    <property type="evidence" value="ECO:0007669"/>
    <property type="project" value="TreeGrafter"/>
</dbReference>
<dbReference type="CDD" id="cd05213">
    <property type="entry name" value="NAD_bind_Glutamyl_tRNA_reduct"/>
    <property type="match status" value="1"/>
</dbReference>
<dbReference type="FunFam" id="3.30.460.30:FF:000001">
    <property type="entry name" value="Glutamyl-tRNA reductase"/>
    <property type="match status" value="1"/>
</dbReference>
<dbReference type="FunFam" id="3.40.50.720:FF:000031">
    <property type="entry name" value="Glutamyl-tRNA reductase"/>
    <property type="match status" value="1"/>
</dbReference>
<dbReference type="Gene3D" id="3.30.460.30">
    <property type="entry name" value="Glutamyl-tRNA reductase, N-terminal domain"/>
    <property type="match status" value="1"/>
</dbReference>
<dbReference type="Gene3D" id="3.40.50.720">
    <property type="entry name" value="NAD(P)-binding Rossmann-like Domain"/>
    <property type="match status" value="1"/>
</dbReference>
<dbReference type="HAMAP" id="MF_00087">
    <property type="entry name" value="Glu_tRNA_reductase"/>
    <property type="match status" value="1"/>
</dbReference>
<dbReference type="InterPro" id="IPR000343">
    <property type="entry name" value="4pyrrol_synth_GluRdtase"/>
</dbReference>
<dbReference type="InterPro" id="IPR015896">
    <property type="entry name" value="4pyrrol_synth_GluRdtase_dimer"/>
</dbReference>
<dbReference type="InterPro" id="IPR015895">
    <property type="entry name" value="4pyrrol_synth_GluRdtase_N"/>
</dbReference>
<dbReference type="InterPro" id="IPR018214">
    <property type="entry name" value="GluRdtase_CS"/>
</dbReference>
<dbReference type="InterPro" id="IPR036453">
    <property type="entry name" value="GluRdtase_dimer_dom_sf"/>
</dbReference>
<dbReference type="InterPro" id="IPR036343">
    <property type="entry name" value="GluRdtase_N_sf"/>
</dbReference>
<dbReference type="InterPro" id="IPR036291">
    <property type="entry name" value="NAD(P)-bd_dom_sf"/>
</dbReference>
<dbReference type="InterPro" id="IPR006151">
    <property type="entry name" value="Shikm_DH/Glu-tRNA_Rdtase"/>
</dbReference>
<dbReference type="NCBIfam" id="TIGR01035">
    <property type="entry name" value="hemA"/>
    <property type="match status" value="1"/>
</dbReference>
<dbReference type="PANTHER" id="PTHR43013">
    <property type="entry name" value="GLUTAMYL-TRNA REDUCTASE"/>
    <property type="match status" value="1"/>
</dbReference>
<dbReference type="PANTHER" id="PTHR43013:SF1">
    <property type="entry name" value="GLUTAMYL-TRNA REDUCTASE"/>
    <property type="match status" value="1"/>
</dbReference>
<dbReference type="Pfam" id="PF00745">
    <property type="entry name" value="GlutR_dimer"/>
    <property type="match status" value="1"/>
</dbReference>
<dbReference type="Pfam" id="PF05201">
    <property type="entry name" value="GlutR_N"/>
    <property type="match status" value="1"/>
</dbReference>
<dbReference type="Pfam" id="PF01488">
    <property type="entry name" value="Shikimate_DH"/>
    <property type="match status" value="1"/>
</dbReference>
<dbReference type="PIRSF" id="PIRSF000445">
    <property type="entry name" value="4pyrrol_synth_GluRdtase"/>
    <property type="match status" value="1"/>
</dbReference>
<dbReference type="SUPFAM" id="SSF69742">
    <property type="entry name" value="Glutamyl tRNA-reductase catalytic, N-terminal domain"/>
    <property type="match status" value="1"/>
</dbReference>
<dbReference type="SUPFAM" id="SSF69075">
    <property type="entry name" value="Glutamyl tRNA-reductase dimerization domain"/>
    <property type="match status" value="1"/>
</dbReference>
<dbReference type="SUPFAM" id="SSF51735">
    <property type="entry name" value="NAD(P)-binding Rossmann-fold domains"/>
    <property type="match status" value="1"/>
</dbReference>
<dbReference type="PROSITE" id="PS00747">
    <property type="entry name" value="GLUTR"/>
    <property type="match status" value="1"/>
</dbReference>